<keyword id="KW-0007">Acetylation</keyword>
<keyword id="KW-0067">ATP-binding</keyword>
<keyword id="KW-0963">Cytoplasm</keyword>
<keyword id="KW-0206">Cytoskeleton</keyword>
<keyword id="KW-0378">Hydrolase</keyword>
<keyword id="KW-0547">Nucleotide-binding</keyword>
<keyword id="KW-0653">Protein transport</keyword>
<keyword id="KW-1185">Reference proteome</keyword>
<keyword id="KW-0813">Transport</keyword>
<dbReference type="EC" id="3.6.4.-" evidence="1"/>
<dbReference type="EMBL" id="U37281">
    <property type="protein sequence ID" value="AAA80356.1"/>
    <property type="molecule type" value="mRNA"/>
</dbReference>
<dbReference type="EMBL" id="U27811">
    <property type="protein sequence ID" value="AAB52506.1"/>
    <property type="molecule type" value="Genomic_DNA"/>
</dbReference>
<dbReference type="EMBL" id="AB016893">
    <property type="protein sequence ID" value="BAB09402.1"/>
    <property type="molecule type" value="Genomic_DNA"/>
</dbReference>
<dbReference type="EMBL" id="CP002688">
    <property type="protein sequence ID" value="AED91450.1"/>
    <property type="molecule type" value="Genomic_DNA"/>
</dbReference>
<dbReference type="EMBL" id="AY062702">
    <property type="protein sequence ID" value="AAL32780.1"/>
    <property type="molecule type" value="mRNA"/>
</dbReference>
<dbReference type="EMBL" id="AY063980">
    <property type="protein sequence ID" value="AAL36336.1"/>
    <property type="molecule type" value="mRNA"/>
</dbReference>
<dbReference type="EMBL" id="AY096397">
    <property type="protein sequence ID" value="AAM20037.1"/>
    <property type="molecule type" value="mRNA"/>
</dbReference>
<dbReference type="EMBL" id="AY114679">
    <property type="protein sequence ID" value="AAM47998.1"/>
    <property type="molecule type" value="mRNA"/>
</dbReference>
<dbReference type="EMBL" id="AY120779">
    <property type="protein sequence ID" value="AAM53337.1"/>
    <property type="molecule type" value="mRNA"/>
</dbReference>
<dbReference type="PIR" id="S68107">
    <property type="entry name" value="S68107"/>
</dbReference>
<dbReference type="RefSeq" id="NP_196543.1">
    <property type="nucleotide sequence ID" value="NM_121018.4"/>
</dbReference>
<dbReference type="SMR" id="P53492"/>
<dbReference type="BioGRID" id="16119">
    <property type="interactions" value="11"/>
</dbReference>
<dbReference type="FunCoup" id="P53492">
    <property type="interactions" value="2840"/>
</dbReference>
<dbReference type="IntAct" id="P53492">
    <property type="interactions" value="11"/>
</dbReference>
<dbReference type="MINT" id="P53492"/>
<dbReference type="STRING" id="3702.P53492"/>
<dbReference type="iPTMnet" id="P53492"/>
<dbReference type="MetOSite" id="P53492"/>
<dbReference type="SwissPalm" id="P53492"/>
<dbReference type="PaxDb" id="3702-AT5G09810.1"/>
<dbReference type="ProteomicsDB" id="244646"/>
<dbReference type="EnsemblPlants" id="AT5G09810.1">
    <property type="protein sequence ID" value="AT5G09810.1"/>
    <property type="gene ID" value="AT5G09810"/>
</dbReference>
<dbReference type="GeneID" id="830841"/>
<dbReference type="Gramene" id="AT5G09810.1">
    <property type="protein sequence ID" value="AT5G09810.1"/>
    <property type="gene ID" value="AT5G09810"/>
</dbReference>
<dbReference type="KEGG" id="ath:AT5G09810"/>
<dbReference type="Araport" id="AT5G09810"/>
<dbReference type="TAIR" id="AT5G09810">
    <property type="gene designation" value="ACT7"/>
</dbReference>
<dbReference type="eggNOG" id="KOG0676">
    <property type="taxonomic scope" value="Eukaryota"/>
</dbReference>
<dbReference type="HOGENOM" id="CLU_027965_0_2_1"/>
<dbReference type="InParanoid" id="P53492"/>
<dbReference type="OMA" id="FHTTAER"/>
<dbReference type="OrthoDB" id="1841232at2759"/>
<dbReference type="PhylomeDB" id="P53492"/>
<dbReference type="CD-CODE" id="4299E36E">
    <property type="entry name" value="Nucleolus"/>
</dbReference>
<dbReference type="PRO" id="PR:P53492"/>
<dbReference type="Proteomes" id="UP000006548">
    <property type="component" value="Chromosome 5"/>
</dbReference>
<dbReference type="ExpressionAtlas" id="P53492">
    <property type="expression patterns" value="baseline and differential"/>
</dbReference>
<dbReference type="GO" id="GO:0009941">
    <property type="term" value="C:chloroplast envelope"/>
    <property type="evidence" value="ECO:0007005"/>
    <property type="project" value="TAIR"/>
</dbReference>
<dbReference type="GO" id="GO:0009570">
    <property type="term" value="C:chloroplast stroma"/>
    <property type="evidence" value="ECO:0007005"/>
    <property type="project" value="TAIR"/>
</dbReference>
<dbReference type="GO" id="GO:0005856">
    <property type="term" value="C:cytoskeleton"/>
    <property type="evidence" value="ECO:0000250"/>
    <property type="project" value="TAIR"/>
</dbReference>
<dbReference type="GO" id="GO:0005829">
    <property type="term" value="C:cytosol"/>
    <property type="evidence" value="ECO:0000314"/>
    <property type="project" value="TAIR"/>
</dbReference>
<dbReference type="GO" id="GO:0005739">
    <property type="term" value="C:mitochondrion"/>
    <property type="evidence" value="ECO:0007005"/>
    <property type="project" value="TAIR"/>
</dbReference>
<dbReference type="GO" id="GO:0005730">
    <property type="term" value="C:nucleolus"/>
    <property type="evidence" value="ECO:0007005"/>
    <property type="project" value="TAIR"/>
</dbReference>
<dbReference type="GO" id="GO:0009505">
    <property type="term" value="C:plant-type cell wall"/>
    <property type="evidence" value="ECO:0007005"/>
    <property type="project" value="TAIR"/>
</dbReference>
<dbReference type="GO" id="GO:0005886">
    <property type="term" value="C:plasma membrane"/>
    <property type="evidence" value="ECO:0007005"/>
    <property type="project" value="TAIR"/>
</dbReference>
<dbReference type="GO" id="GO:0009506">
    <property type="term" value="C:plasmodesma"/>
    <property type="evidence" value="ECO:0007005"/>
    <property type="project" value="TAIR"/>
</dbReference>
<dbReference type="GO" id="GO:0005524">
    <property type="term" value="F:ATP binding"/>
    <property type="evidence" value="ECO:0007669"/>
    <property type="project" value="UniProtKB-KW"/>
</dbReference>
<dbReference type="GO" id="GO:0016787">
    <property type="term" value="F:hydrolase activity"/>
    <property type="evidence" value="ECO:0007669"/>
    <property type="project" value="UniProtKB-KW"/>
</dbReference>
<dbReference type="GO" id="GO:0005200">
    <property type="term" value="F:structural constituent of cytoskeleton"/>
    <property type="evidence" value="ECO:0000250"/>
    <property type="project" value="TAIR"/>
</dbReference>
<dbReference type="GO" id="GO:0051301">
    <property type="term" value="P:cell division"/>
    <property type="evidence" value="ECO:0000315"/>
    <property type="project" value="TAIR"/>
</dbReference>
<dbReference type="GO" id="GO:0006893">
    <property type="term" value="P:Golgi to plasma membrane transport"/>
    <property type="evidence" value="ECO:0000315"/>
    <property type="project" value="UniProtKB"/>
</dbReference>
<dbReference type="GO" id="GO:0008104">
    <property type="term" value="P:protein localization"/>
    <property type="evidence" value="ECO:0000315"/>
    <property type="project" value="UniProtKB"/>
</dbReference>
<dbReference type="GO" id="GO:0015031">
    <property type="term" value="P:protein transport"/>
    <property type="evidence" value="ECO:0007669"/>
    <property type="project" value="UniProtKB-KW"/>
</dbReference>
<dbReference type="GO" id="GO:0009733">
    <property type="term" value="P:response to auxin"/>
    <property type="evidence" value="ECO:0000270"/>
    <property type="project" value="TAIR"/>
</dbReference>
<dbReference type="GO" id="GO:0009416">
    <property type="term" value="P:response to light stimulus"/>
    <property type="evidence" value="ECO:0000270"/>
    <property type="project" value="TAIR"/>
</dbReference>
<dbReference type="GO" id="GO:0009611">
    <property type="term" value="P:response to wounding"/>
    <property type="evidence" value="ECO:0000270"/>
    <property type="project" value="TAIR"/>
</dbReference>
<dbReference type="GO" id="GO:0048364">
    <property type="term" value="P:root development"/>
    <property type="evidence" value="ECO:0000315"/>
    <property type="project" value="TAIR"/>
</dbReference>
<dbReference type="GO" id="GO:0010053">
    <property type="term" value="P:root epidermal cell differentiation"/>
    <property type="evidence" value="ECO:0000315"/>
    <property type="project" value="TAIR"/>
</dbReference>
<dbReference type="GO" id="GO:0048767">
    <property type="term" value="P:root hair elongation"/>
    <property type="evidence" value="ECO:0000315"/>
    <property type="project" value="TAIR"/>
</dbReference>
<dbReference type="GO" id="GO:0009845">
    <property type="term" value="P:seed germination"/>
    <property type="evidence" value="ECO:0000315"/>
    <property type="project" value="TAIR"/>
</dbReference>
<dbReference type="CDD" id="cd10224">
    <property type="entry name" value="ASKHA_NBD_actin"/>
    <property type="match status" value="1"/>
</dbReference>
<dbReference type="FunFam" id="2.30.36.70:FF:000001">
    <property type="entry name" value="Actin, alpha skeletal muscle"/>
    <property type="match status" value="1"/>
</dbReference>
<dbReference type="FunFam" id="3.30.420.40:FF:000291">
    <property type="entry name" value="Actin, alpha skeletal muscle"/>
    <property type="match status" value="1"/>
</dbReference>
<dbReference type="FunFam" id="3.90.640.10:FF:000001">
    <property type="entry name" value="Actin, muscle"/>
    <property type="match status" value="1"/>
</dbReference>
<dbReference type="FunFam" id="3.30.420.40:FF:000404">
    <property type="entry name" value="Major actin"/>
    <property type="match status" value="1"/>
</dbReference>
<dbReference type="FunFam" id="3.30.420.40:FF:000058">
    <property type="entry name" value="Putative actin-related protein 5"/>
    <property type="match status" value="1"/>
</dbReference>
<dbReference type="Gene3D" id="3.30.420.40">
    <property type="match status" value="2"/>
</dbReference>
<dbReference type="Gene3D" id="3.90.640.10">
    <property type="entry name" value="Actin, Chain A, domain 4"/>
    <property type="match status" value="1"/>
</dbReference>
<dbReference type="InterPro" id="IPR004000">
    <property type="entry name" value="Actin"/>
</dbReference>
<dbReference type="InterPro" id="IPR020902">
    <property type="entry name" value="Actin/actin-like_CS"/>
</dbReference>
<dbReference type="InterPro" id="IPR004001">
    <property type="entry name" value="Actin_CS"/>
</dbReference>
<dbReference type="InterPro" id="IPR043129">
    <property type="entry name" value="ATPase_NBD"/>
</dbReference>
<dbReference type="PANTHER" id="PTHR11937">
    <property type="entry name" value="ACTIN"/>
    <property type="match status" value="1"/>
</dbReference>
<dbReference type="Pfam" id="PF00022">
    <property type="entry name" value="Actin"/>
    <property type="match status" value="1"/>
</dbReference>
<dbReference type="PRINTS" id="PR00190">
    <property type="entry name" value="ACTIN"/>
</dbReference>
<dbReference type="SMART" id="SM00268">
    <property type="entry name" value="ACTIN"/>
    <property type="match status" value="1"/>
</dbReference>
<dbReference type="SUPFAM" id="SSF53067">
    <property type="entry name" value="Actin-like ATPase domain"/>
    <property type="match status" value="2"/>
</dbReference>
<dbReference type="PROSITE" id="PS00406">
    <property type="entry name" value="ACTINS_1"/>
    <property type="match status" value="1"/>
</dbReference>
<dbReference type="PROSITE" id="PS00432">
    <property type="entry name" value="ACTINS_2"/>
    <property type="match status" value="1"/>
</dbReference>
<dbReference type="PROSITE" id="PS01132">
    <property type="entry name" value="ACTINS_ACT_LIKE"/>
    <property type="match status" value="1"/>
</dbReference>
<evidence type="ECO:0000250" key="1">
    <source>
        <dbReference type="UniProtKB" id="P68137"/>
    </source>
</evidence>
<evidence type="ECO:0000250" key="2">
    <source>
        <dbReference type="UniProtKB" id="Q96292"/>
    </source>
</evidence>
<evidence type="ECO:0000269" key="3">
    <source>
    </source>
</evidence>
<evidence type="ECO:0000269" key="4">
    <source>
    </source>
</evidence>
<evidence type="ECO:0000303" key="5">
    <source>
    </source>
</evidence>
<evidence type="ECO:0000303" key="6">
    <source ref="1"/>
</evidence>
<evidence type="ECO:0000305" key="7"/>
<evidence type="ECO:0000312" key="8">
    <source>
        <dbReference type="Araport" id="AT5G09810"/>
    </source>
</evidence>
<evidence type="ECO:0000312" key="9">
    <source>
        <dbReference type="EMBL" id="BAB09402.1"/>
    </source>
</evidence>
<protein>
    <recommendedName>
        <fullName evidence="5">Actin-7</fullName>
        <ecNumber evidence="1">3.6.4.-</ecNumber>
    </recommendedName>
    <alternativeName>
        <fullName evidence="6">Actin-2</fullName>
    </alternativeName>
</protein>
<proteinExistence type="evidence at protein level"/>
<gene>
    <name evidence="5" type="primary">ACT7</name>
    <name evidence="8" type="ordered locus">At5g09810</name>
    <name evidence="9" type="ORF">MYH9.2</name>
</gene>
<organism>
    <name type="scientific">Arabidopsis thaliana</name>
    <name type="common">Mouse-ear cress</name>
    <dbReference type="NCBI Taxonomy" id="3702"/>
    <lineage>
        <taxon>Eukaryota</taxon>
        <taxon>Viridiplantae</taxon>
        <taxon>Streptophyta</taxon>
        <taxon>Embryophyta</taxon>
        <taxon>Tracheophyta</taxon>
        <taxon>Spermatophyta</taxon>
        <taxon>Magnoliopsida</taxon>
        <taxon>eudicotyledons</taxon>
        <taxon>Gunneridae</taxon>
        <taxon>Pentapetalae</taxon>
        <taxon>rosids</taxon>
        <taxon>malvids</taxon>
        <taxon>Brassicales</taxon>
        <taxon>Brassicaceae</taxon>
        <taxon>Camelineae</taxon>
        <taxon>Arabidopsis</taxon>
    </lineage>
</organism>
<name>ACT7_ARATH</name>
<sequence>MADGEDIQPLVCDNGTGMVKAGFAGDDAPRAVFPSIVGRPRHTGVMVGMGQKDAYVGDEAQSKRGILTLKYPIEHGIVSNWDDMEKIWHHTFYNELRVAPEEHPVLLTEAPLNPKANREKMTQIMFETFNVPAMYVAIQAVLSLYASGRTTGIVLDSGDGVSHTVPIYEGYALPHAILRLDLAGRDLTDSLMKILTERGYMFTTTAEREIVRDIKEKLAYVALDYEQELETAKSSSSVEKNYELPDGQVITIGAERFRCPEVLFQPSLIGMEAPGIHETTYNSIMKCDVDIRKDLYGNIVLSGGSTMFPGIADRMSKEITALAPSSMKIKVVAPPERKYSVWIGGSILASLSTFQQMWISKSEYDESGPSIVHRKCF</sequence>
<feature type="initiator methionine" description="Removed" evidence="2">
    <location>
        <position position="1"/>
    </location>
</feature>
<feature type="chain" id="PRO_0000088892" description="Actin-7">
    <location>
        <begin position="2"/>
        <end position="377"/>
    </location>
</feature>
<feature type="modified residue" description="N-acetylalanine" evidence="2">
    <location>
        <position position="2"/>
    </location>
</feature>
<feature type="mutagenesis site" description="In act7-9; impaired trafficking and endocytic recycling of ABCG36/PEN3 between the trans-Golgi network and the plasma membrane in root epidermal and cap cells." evidence="4">
    <original>G</original>
    <variation>E</variation>
    <location>
        <position position="15"/>
    </location>
</feature>
<feature type="mutagenesis site" description="In act7-8; impaired trafficking and endocytic recycling of ABCG36/PEN3 between the trans-Golgi network and the plasma membrane in root epidermal and cap cells." evidence="4">
    <original>T</original>
    <variation>I</variation>
    <location>
        <position position="108"/>
    </location>
</feature>
<reference key="1">
    <citation type="submission" date="1995-11" db="EMBL/GenBank/DDBJ databases">
        <title>A cDNA sequence encoding a novel actin from Arabidopsis thaliana.</title>
        <authorList>
            <person name="Hong Y."/>
            <person name="Chua N."/>
        </authorList>
    </citation>
    <scope>NUCLEOTIDE SEQUENCE [MRNA]</scope>
</reference>
<reference key="2">
    <citation type="journal article" date="1996" name="Plant Physiol.">
        <title>The Arabidopsis ACT7 actin gene is expressed in rapidly developing tissues and responds to several external stimuli.</title>
        <authorList>
            <person name="McDowell J.M."/>
            <person name="An Y.-Q."/>
            <person name="Huang S."/>
            <person name="McKinney E.C."/>
            <person name="Meagher R.B."/>
        </authorList>
    </citation>
    <scope>NUCLEOTIDE SEQUENCE [GENOMIC DNA]</scope>
    <scope>CHARACTERIZATION</scope>
    <source>
        <strain>cv. Columbia</strain>
    </source>
</reference>
<reference key="3">
    <citation type="submission" date="1997-04" db="EMBL/GenBank/DDBJ databases">
        <authorList>
            <person name="McKinney E.C."/>
            <person name="An Y.-Q."/>
        </authorList>
    </citation>
    <scope>SEQUENCE REVISION</scope>
</reference>
<reference key="4">
    <citation type="journal article" date="1998" name="DNA Res.">
        <title>Structural analysis of Arabidopsis thaliana chromosome 5. VIII. Sequence features of the regions of 1,081,958 bp covered by seventeen physically assigned P1 and TAC clones.</title>
        <authorList>
            <person name="Asamizu E."/>
            <person name="Sato S."/>
            <person name="Kaneko T."/>
            <person name="Nakamura Y."/>
            <person name="Kotani H."/>
            <person name="Miyajima N."/>
            <person name="Tabata S."/>
        </authorList>
    </citation>
    <scope>NUCLEOTIDE SEQUENCE [LARGE SCALE GENOMIC DNA]</scope>
    <source>
        <strain>cv. Columbia</strain>
    </source>
</reference>
<reference key="5">
    <citation type="journal article" date="2017" name="Plant J.">
        <title>Araport11: a complete reannotation of the Arabidopsis thaliana reference genome.</title>
        <authorList>
            <person name="Cheng C.Y."/>
            <person name="Krishnakumar V."/>
            <person name="Chan A.P."/>
            <person name="Thibaud-Nissen F."/>
            <person name="Schobel S."/>
            <person name="Town C.D."/>
        </authorList>
    </citation>
    <scope>GENOME REANNOTATION</scope>
    <source>
        <strain>cv. Columbia</strain>
    </source>
</reference>
<reference key="6">
    <citation type="journal article" date="2003" name="Science">
        <title>Empirical analysis of transcriptional activity in the Arabidopsis genome.</title>
        <authorList>
            <person name="Yamada K."/>
            <person name="Lim J."/>
            <person name="Dale J.M."/>
            <person name="Chen H."/>
            <person name="Shinn P."/>
            <person name="Palm C.J."/>
            <person name="Southwick A.M."/>
            <person name="Wu H.C."/>
            <person name="Kim C.J."/>
            <person name="Nguyen M."/>
            <person name="Pham P.K."/>
            <person name="Cheuk R.F."/>
            <person name="Karlin-Newmann G."/>
            <person name="Liu S.X."/>
            <person name="Lam B."/>
            <person name="Sakano H."/>
            <person name="Wu T."/>
            <person name="Yu G."/>
            <person name="Miranda M."/>
            <person name="Quach H.L."/>
            <person name="Tripp M."/>
            <person name="Chang C.H."/>
            <person name="Lee J.M."/>
            <person name="Toriumi M.J."/>
            <person name="Chan M.M."/>
            <person name="Tang C.C."/>
            <person name="Onodera C.S."/>
            <person name="Deng J.M."/>
            <person name="Akiyama K."/>
            <person name="Ansari Y."/>
            <person name="Arakawa T."/>
            <person name="Banh J."/>
            <person name="Banno F."/>
            <person name="Bowser L."/>
            <person name="Brooks S.Y."/>
            <person name="Carninci P."/>
            <person name="Chao Q."/>
            <person name="Choy N."/>
            <person name="Enju A."/>
            <person name="Goldsmith A.D."/>
            <person name="Gurjal M."/>
            <person name="Hansen N.F."/>
            <person name="Hayashizaki Y."/>
            <person name="Johnson-Hopson C."/>
            <person name="Hsuan V.W."/>
            <person name="Iida K."/>
            <person name="Karnes M."/>
            <person name="Khan S."/>
            <person name="Koesema E."/>
            <person name="Ishida J."/>
            <person name="Jiang P.X."/>
            <person name="Jones T."/>
            <person name="Kawai J."/>
            <person name="Kamiya A."/>
            <person name="Meyers C."/>
            <person name="Nakajima M."/>
            <person name="Narusaka M."/>
            <person name="Seki M."/>
            <person name="Sakurai T."/>
            <person name="Satou M."/>
            <person name="Tamse R."/>
            <person name="Vaysberg M."/>
            <person name="Wallender E.K."/>
            <person name="Wong C."/>
            <person name="Yamamura Y."/>
            <person name="Yuan S."/>
            <person name="Shinozaki K."/>
            <person name="Davis R.W."/>
            <person name="Theologis A."/>
            <person name="Ecker J.R."/>
        </authorList>
    </citation>
    <scope>NUCLEOTIDE SEQUENCE [LARGE SCALE MRNA]</scope>
    <source>
        <strain>cv. Columbia</strain>
    </source>
</reference>
<reference key="7">
    <citation type="journal article" date="1996" name="Genetics">
        <title>Structure and evolution of the actin gene family in Arabidopsis thaliana.</title>
        <authorList>
            <person name="McDowell J.M."/>
            <person name="Huang S."/>
            <person name="McKinney E.C."/>
            <person name="An Y.-Q."/>
            <person name="Meagher R.B."/>
        </authorList>
    </citation>
    <scope>GENE FAMILY ORGANIZATION</scope>
    <scope>CHARACTERIZATION</scope>
    <source>
        <strain>cv. Columbia</strain>
    </source>
</reference>
<reference key="8">
    <citation type="journal article" date="2001" name="Plant Cell">
        <title>One plant actin isovariant, ACT7, is induced by auxin and required for normal callus formation.</title>
        <authorList>
            <person name="Kandasamy M.K."/>
            <person name="Gilliland L.U."/>
            <person name="McKinney E.C."/>
            <person name="Meagher R.B."/>
        </authorList>
    </citation>
    <scope>FUNCTION</scope>
    <scope>INDUCTION</scope>
    <source>
        <strain>cv. Columbia</strain>
    </source>
</reference>
<reference key="9">
    <citation type="journal article" date="2009" name="J. Proteomics">
        <title>Phosphoproteomic analysis of nuclei-enriched fractions from Arabidopsis thaliana.</title>
        <authorList>
            <person name="Jones A.M.E."/>
            <person name="MacLean D."/>
            <person name="Studholme D.J."/>
            <person name="Serna-Sanz A."/>
            <person name="Andreasson E."/>
            <person name="Rathjen J.P."/>
            <person name="Peck S.C."/>
        </authorList>
    </citation>
    <scope>IDENTIFICATION BY MASS SPECTROMETRY [LARGE SCALE ANALYSIS]</scope>
    <source>
        <strain>cv. Columbia</strain>
    </source>
</reference>
<reference key="10">
    <citation type="journal article" date="2016" name="Plant Physiol.">
        <title>A framework for lateral membrane trafficking and polar tethering of the PEN3 ATP-binding cassette transporter.</title>
        <authorList>
            <person name="Mao H."/>
            <person name="Nakamura M."/>
            <person name="Viotti C."/>
            <person name="Grebe M."/>
        </authorList>
    </citation>
    <scope>FUNCTION</scope>
    <scope>DISRUPTION PHENOTYPE</scope>
    <scope>MUTAGENESIS OF GLY-15 AND THR-108</scope>
    <source>
        <strain>cv. Columbia</strain>
    </source>
</reference>
<accession>P53492</accession>
<accession>P53495</accession>
<comment type="function">
    <text evidence="3 4">Actins are highly conserved proteins that are involved in various types of cell motility and are ubiquitously expressed in all eukaryotic cells (PubMed:11449050). Essential component of cell cytoskeleton; plays an important role in cytoplasmic streaming, cell shape determination, cell division, organelle movement and extension growth (PubMed:11449050). This is considered as one of the vegetative actins which is involved in the regulation of hormone-induced plant cell proliferation and callus formation (PubMed:11449050). Required for the trafficking and endocytic recycling of ABCG36/PEN3 between the trans-Golgi network and the plasma membrane in root epidermal and cap cells (PubMed:27803190).</text>
</comment>
<comment type="catalytic activity">
    <reaction evidence="1">
        <text>ATP + H2O = ADP + phosphate + H(+)</text>
        <dbReference type="Rhea" id="RHEA:13065"/>
        <dbReference type="ChEBI" id="CHEBI:15377"/>
        <dbReference type="ChEBI" id="CHEBI:15378"/>
        <dbReference type="ChEBI" id="CHEBI:30616"/>
        <dbReference type="ChEBI" id="CHEBI:43474"/>
        <dbReference type="ChEBI" id="CHEBI:456216"/>
    </reaction>
</comment>
<comment type="subunit">
    <text>Polymerization of globular actin (G-actin) leads to a structural filament (F-actin) in the form of a two-stranded helix. The binding of profilin to monomeric G-actin cause the sequestration of actin into profilactin complexes, and prevents the polymerization.</text>
</comment>
<comment type="subcellular location">
    <subcellularLocation>
        <location>Cytoplasm</location>
        <location>Cytoskeleton</location>
    </subcellularLocation>
</comment>
<comment type="tissue specificity">
    <text>Constitutively expressed at high levels in young expanding vegetative tissues. Also strongly expressed in the hypocotyl and seed coat. Little or no expression is detected in mature pollen sacs, ovules, embryos or seeds.</text>
</comment>
<comment type="induction">
    <text evidence="3">Differentially regulated in response to exogenous hormone treatment. In particular, auxin is a strong inducer.</text>
</comment>
<comment type="disruption phenotype">
    <text evidence="4">Impaired trafficking and endocytic recycling of ABCG36/PEN3 between the trans-Golgi network and the plasma membrane in root epidermal and cap cells.</text>
</comment>
<comment type="miscellaneous">
    <text>There are 8 actin genes in A.thaliana.</text>
</comment>
<comment type="similarity">
    <text evidence="7">Belongs to the actin family.</text>
</comment>